<keyword id="KW-0963">Cytoplasm</keyword>
<keyword id="KW-1017">Isopeptide bond</keyword>
<keyword id="KW-0539">Nucleus</keyword>
<keyword id="KW-0597">Phosphoprotein</keyword>
<keyword id="KW-0650">Protein phosphatase inhibitor</keyword>
<keyword id="KW-1185">Reference proteome</keyword>
<keyword id="KW-0832">Ubl conjugation</keyword>
<name>PBIR1_RAT</name>
<protein>
    <recommendedName>
        <fullName evidence="1">P2R1A-PPP2R2A-interacting phosphatase regulator 1</fullName>
    </recommendedName>
    <alternativeName>
        <fullName evidence="1">PABIR family member 1</fullName>
    </alternativeName>
</protein>
<sequence length="286" mass="30472">MAQEKMELDLELPAGTGASPAEGGGPGSGGLRRSNSAPLIHGLSDSSPVFQAEAPSARRNSTTFPSRHGLLLPASPVRMHSSRLHQIKQEEGMDLINRETVHEREVQTAMQISHSWEESFSLSDNDVEKSASPKRIDFIPVSPAPSPTRGIGKQCFSPSLQSFVSSNGLPPSPIPSPTTRFTTRRSQSPINCIRPSVLGPLKRKCEMETDYQPKRFFQGITNMLSSDVAQLSEPGVCVSSDTLDGNSSSAGSSCNSPAKVSTTTDSPVSPAQAASPFIPVDELSSK</sequence>
<proteinExistence type="evidence at protein level"/>
<comment type="function">
    <text evidence="1">Acts as an inhibitor of serine/threonine-protein phosphatase 2A (PP2A) activity (By similarity). Inhibits PP2A activity by blocking the substrate binding site on PPP2R2A and the active site of PPP2CA (By similarity). Potentiates ubiquitin-mediated proteasomal degradation of serine/threonine-protein phosphatase 2A catalytic subunit alpha (PPP2CA) (By similarity). Inhibits PP2A-mediated dephosphorylation of WEE1, promoting ubiquitin-mediated proteolysis of WEE1, thereby releasing G2/M checkpoint (By similarity).</text>
</comment>
<comment type="subunit">
    <text evidence="1">Interacts with PPP2CA and PPP2R1A (By similarity). Interacts (via its N-terminus) with PPP2R2A; the interaction is direct and this interaction inhibits PP2A activity (By similarity). The CHEK1-mediated Ser-36 phosphorylated form interacts with 14-3-3 proteins (By similarity).</text>
</comment>
<comment type="subcellular location">
    <subcellularLocation>
        <location evidence="1">Nucleus</location>
    </subcellularLocation>
    <subcellularLocation>
        <location evidence="1">Cytoplasm</location>
    </subcellularLocation>
    <text evidence="1">The CHEK1-mediated Ser-36 phosphorylated form is sequestered by 14-3-3 proteins in the cytoplasm and fails to translocate to the nucleus, where it otherwise inhibits serine/threonine-protein phosphatase 2A.</text>
</comment>
<comment type="PTM">
    <text evidence="1">CHEK1-mediated phosphorylation at Ser-36 negatively regulates its ability to inhibit serine/threonine-protein phosphatase 2A (PP2A) activity. Phosphorylation leads to its release from the PP2A complex and its sequestration by 14-3-3 proteins in the cytoplasm resulting in its inability to translocate to the nucleus, where it otherwise inhibits PP2A.</text>
</comment>
<comment type="similarity">
    <text evidence="4">Belongs to the FAM122 family.</text>
</comment>
<accession>Q6AYT4</accession>
<feature type="chain" id="PRO_0000089691" description="P2R1A-PPP2R2A-interacting phosphatase regulator 1">
    <location>
        <begin position="1"/>
        <end position="286"/>
    </location>
</feature>
<feature type="region of interest" description="Disordered" evidence="3">
    <location>
        <begin position="1"/>
        <end position="46"/>
    </location>
</feature>
<feature type="region of interest" description="Disordered" evidence="3">
    <location>
        <begin position="166"/>
        <end position="187"/>
    </location>
</feature>
<feature type="region of interest" description="Disordered" evidence="3">
    <location>
        <begin position="238"/>
        <end position="286"/>
    </location>
</feature>
<feature type="compositionally biased region" description="Low complexity" evidence="3">
    <location>
        <begin position="177"/>
        <end position="187"/>
    </location>
</feature>
<feature type="compositionally biased region" description="Low complexity" evidence="3">
    <location>
        <begin position="245"/>
        <end position="256"/>
    </location>
</feature>
<feature type="compositionally biased region" description="Polar residues" evidence="3">
    <location>
        <begin position="258"/>
        <end position="269"/>
    </location>
</feature>
<feature type="modified residue" description="Phosphoserine" evidence="1">
    <location>
        <position position="34"/>
    </location>
</feature>
<feature type="modified residue" description="Phosphoserine; by CHEK1" evidence="1">
    <location>
        <position position="36"/>
    </location>
</feature>
<feature type="modified residue" description="Phosphoserine" evidence="1">
    <location>
        <position position="44"/>
    </location>
</feature>
<feature type="modified residue" description="Phosphoserine" evidence="1">
    <location>
        <position position="47"/>
    </location>
</feature>
<feature type="modified residue" description="Phosphoserine" evidence="6">
    <location>
        <position position="61"/>
    </location>
</feature>
<feature type="modified residue" description="Phosphoserine" evidence="6">
    <location>
        <position position="75"/>
    </location>
</feature>
<feature type="modified residue" description="Phosphoserine" evidence="6">
    <location>
        <position position="142"/>
    </location>
</feature>
<feature type="modified residue" description="Phosphoserine" evidence="6">
    <location>
        <position position="146"/>
    </location>
</feature>
<feature type="modified residue" description="Phosphothreonine" evidence="1">
    <location>
        <position position="148"/>
    </location>
</feature>
<feature type="modified residue" description="Phosphoserine" evidence="1">
    <location>
        <position position="186"/>
    </location>
</feature>
<feature type="modified residue" description="Phosphoserine" evidence="6">
    <location>
        <position position="188"/>
    </location>
</feature>
<feature type="modified residue" description="Phosphoserine" evidence="2">
    <location>
        <position position="266"/>
    </location>
</feature>
<feature type="modified residue" description="Phosphoserine" evidence="6">
    <location>
        <position position="269"/>
    </location>
</feature>
<feature type="modified residue" description="Phosphoserine" evidence="1">
    <location>
        <position position="275"/>
    </location>
</feature>
<feature type="cross-link" description="Glycyl lysine isopeptide (Lys-Gly) (interchain with G-Cter in SUMO1)" evidence="1">
    <location>
        <position position="88"/>
    </location>
</feature>
<reference key="1">
    <citation type="journal article" date="2004" name="Genome Res.">
        <title>The status, quality, and expansion of the NIH full-length cDNA project: the Mammalian Gene Collection (MGC).</title>
        <authorList>
            <consortium name="The MGC Project Team"/>
        </authorList>
    </citation>
    <scope>NUCLEOTIDE SEQUENCE [LARGE SCALE MRNA]</scope>
    <source>
        <tissue>Kidney</tissue>
    </source>
</reference>
<reference key="2">
    <citation type="journal article" date="2012" name="Nat. Commun.">
        <title>Quantitative maps of protein phosphorylation sites across 14 different rat organs and tissues.</title>
        <authorList>
            <person name="Lundby A."/>
            <person name="Secher A."/>
            <person name="Lage K."/>
            <person name="Nordsborg N.B."/>
            <person name="Dmytriyev A."/>
            <person name="Lundby C."/>
            <person name="Olsen J.V."/>
        </authorList>
    </citation>
    <scope>PHOSPHORYLATION [LARGE SCALE ANALYSIS] AT SER-61; SER-75; SER-142; SER-146; SER-188 AND SER-269</scope>
    <scope>IDENTIFICATION BY MASS SPECTROMETRY [LARGE SCALE ANALYSIS]</scope>
</reference>
<dbReference type="EMBL" id="BC078922">
    <property type="protein sequence ID" value="AAH78922.1"/>
    <property type="molecule type" value="mRNA"/>
</dbReference>
<dbReference type="RefSeq" id="NP_001014051.1">
    <property type="nucleotide sequence ID" value="NM_001014029.1"/>
</dbReference>
<dbReference type="SMR" id="Q6AYT4"/>
<dbReference type="FunCoup" id="Q6AYT4">
    <property type="interactions" value="2101"/>
</dbReference>
<dbReference type="GlyGen" id="Q6AYT4">
    <property type="glycosylation" value="1 site"/>
</dbReference>
<dbReference type="iPTMnet" id="Q6AYT4"/>
<dbReference type="PhosphoSitePlus" id="Q6AYT4"/>
<dbReference type="PaxDb" id="10116-ENSRNOP00000068087"/>
<dbReference type="Ensembl" id="ENSRNOT00000076544.2">
    <property type="protein sequence ID" value="ENSRNOP00000068087.1"/>
    <property type="gene ID" value="ENSRNOG00000051051.2"/>
</dbReference>
<dbReference type="GeneID" id="309420"/>
<dbReference type="KEGG" id="rno:309420"/>
<dbReference type="UCSC" id="RGD:1310316">
    <property type="organism name" value="rat"/>
</dbReference>
<dbReference type="AGR" id="RGD:1310316"/>
<dbReference type="CTD" id="116224"/>
<dbReference type="RGD" id="1310316">
    <property type="gene designation" value="Pabir1"/>
</dbReference>
<dbReference type="eggNOG" id="ENOG502QTCH">
    <property type="taxonomic scope" value="Eukaryota"/>
</dbReference>
<dbReference type="GeneTree" id="ENSGT00390000015476"/>
<dbReference type="HOGENOM" id="CLU_083344_0_0_1"/>
<dbReference type="InParanoid" id="Q6AYT4"/>
<dbReference type="OMA" id="ISHHTDS"/>
<dbReference type="OrthoDB" id="10036177at2759"/>
<dbReference type="PhylomeDB" id="Q6AYT4"/>
<dbReference type="PRO" id="PR:Q6AYT4"/>
<dbReference type="Proteomes" id="UP000002494">
    <property type="component" value="Chromosome 1"/>
</dbReference>
<dbReference type="Bgee" id="ENSRNOG00000051051">
    <property type="expression patterns" value="Expressed in heart and 19 other cell types or tissues"/>
</dbReference>
<dbReference type="GO" id="GO:0005737">
    <property type="term" value="C:cytoplasm"/>
    <property type="evidence" value="ECO:0000250"/>
    <property type="project" value="UniProtKB"/>
</dbReference>
<dbReference type="GO" id="GO:0005634">
    <property type="term" value="C:nucleus"/>
    <property type="evidence" value="ECO:0000250"/>
    <property type="project" value="UniProtKB"/>
</dbReference>
<dbReference type="GO" id="GO:0051721">
    <property type="term" value="F:protein phosphatase 2A binding"/>
    <property type="evidence" value="ECO:0000266"/>
    <property type="project" value="RGD"/>
</dbReference>
<dbReference type="GO" id="GO:0004864">
    <property type="term" value="F:protein phosphatase inhibitor activity"/>
    <property type="evidence" value="ECO:0000266"/>
    <property type="project" value="RGD"/>
</dbReference>
<dbReference type="GO" id="GO:0004865">
    <property type="term" value="F:protein serine/threonine phosphatase inhibitor activity"/>
    <property type="evidence" value="ECO:0000250"/>
    <property type="project" value="UniProtKB"/>
</dbReference>
<dbReference type="GO" id="GO:0044818">
    <property type="term" value="P:mitotic G2/M transition checkpoint"/>
    <property type="evidence" value="ECO:0000250"/>
    <property type="project" value="UniProtKB"/>
</dbReference>
<dbReference type="GO" id="GO:0030307">
    <property type="term" value="P:positive regulation of cell growth"/>
    <property type="evidence" value="ECO:0000250"/>
    <property type="project" value="UniProtKB"/>
</dbReference>
<dbReference type="GO" id="GO:0032436">
    <property type="term" value="P:positive regulation of proteasomal ubiquitin-dependent protein catabolic process"/>
    <property type="evidence" value="ECO:0000250"/>
    <property type="project" value="UniProtKB"/>
</dbReference>
<dbReference type="InterPro" id="IPR026716">
    <property type="entry name" value="PBIR1/2/3"/>
</dbReference>
<dbReference type="PANTHER" id="PTHR22227">
    <property type="entry name" value="FAMILY WITH SEQUENCE SIMILARITY 122B ISOFORM X1"/>
    <property type="match status" value="1"/>
</dbReference>
<dbReference type="PANTHER" id="PTHR22227:SF14">
    <property type="entry name" value="PPP2R1A-PPP2R2A-INTERACTING PHOSPHATASE REGULATOR 1"/>
    <property type="match status" value="1"/>
</dbReference>
<gene>
    <name evidence="1" type="primary">Pabir1</name>
    <name evidence="5" type="synonym">Fam122a</name>
</gene>
<organism>
    <name type="scientific">Rattus norvegicus</name>
    <name type="common">Rat</name>
    <dbReference type="NCBI Taxonomy" id="10116"/>
    <lineage>
        <taxon>Eukaryota</taxon>
        <taxon>Metazoa</taxon>
        <taxon>Chordata</taxon>
        <taxon>Craniata</taxon>
        <taxon>Vertebrata</taxon>
        <taxon>Euteleostomi</taxon>
        <taxon>Mammalia</taxon>
        <taxon>Eutheria</taxon>
        <taxon>Euarchontoglires</taxon>
        <taxon>Glires</taxon>
        <taxon>Rodentia</taxon>
        <taxon>Myomorpha</taxon>
        <taxon>Muroidea</taxon>
        <taxon>Muridae</taxon>
        <taxon>Murinae</taxon>
        <taxon>Rattus</taxon>
    </lineage>
</organism>
<evidence type="ECO:0000250" key="1">
    <source>
        <dbReference type="UniProtKB" id="Q96E09"/>
    </source>
</evidence>
<evidence type="ECO:0000250" key="2">
    <source>
        <dbReference type="UniProtKB" id="Q9DB52"/>
    </source>
</evidence>
<evidence type="ECO:0000256" key="3">
    <source>
        <dbReference type="SAM" id="MobiDB-lite"/>
    </source>
</evidence>
<evidence type="ECO:0000305" key="4"/>
<evidence type="ECO:0000312" key="5">
    <source>
        <dbReference type="RGD" id="1310316"/>
    </source>
</evidence>
<evidence type="ECO:0007744" key="6">
    <source>
    </source>
</evidence>